<evidence type="ECO:0000250" key="1">
    <source>
        <dbReference type="UniProtKB" id="P07911"/>
    </source>
</evidence>
<evidence type="ECO:0000250" key="2">
    <source>
        <dbReference type="UniProtKB" id="P19218"/>
    </source>
</evidence>
<evidence type="ECO:0000250" key="3">
    <source>
        <dbReference type="UniProtKB" id="P25291"/>
    </source>
</evidence>
<evidence type="ECO:0000250" key="4">
    <source>
        <dbReference type="UniProtKB" id="Q9D733"/>
    </source>
</evidence>
<evidence type="ECO:0000255" key="5"/>
<evidence type="ECO:0000255" key="6">
    <source>
        <dbReference type="PROSITE-ProRule" id="PRU00076"/>
    </source>
</evidence>
<evidence type="ECO:0000255" key="7">
    <source>
        <dbReference type="PROSITE-ProRule" id="PRU00375"/>
    </source>
</evidence>
<evidence type="ECO:0000269" key="8">
    <source>
    </source>
</evidence>
<evidence type="ECO:0000269" key="9">
    <source>
    </source>
</evidence>
<evidence type="ECO:0000269" key="10">
    <source>
    </source>
</evidence>
<evidence type="ECO:0000269" key="11">
    <source>
    </source>
</evidence>
<evidence type="ECO:0000303" key="12">
    <source>
    </source>
</evidence>
<evidence type="ECO:0000303" key="13">
    <source>
    </source>
</evidence>
<evidence type="ECO:0000303" key="14">
    <source ref="5"/>
</evidence>
<evidence type="ECO:0000305" key="15"/>
<evidence type="ECO:0000305" key="16">
    <source>
    </source>
</evidence>
<evidence type="ECO:0000305" key="17">
    <source>
    </source>
</evidence>
<evidence type="ECO:0000305" key="18">
    <source>
    </source>
</evidence>
<evidence type="ECO:0000305" key="19">
    <source>
    </source>
</evidence>
<evidence type="ECO:0000312" key="20">
    <source>
        <dbReference type="HGNC" id="HGNC:4441"/>
    </source>
</evidence>
<evidence type="ECO:0007744" key="21">
    <source>
        <dbReference type="PDB" id="7P6R"/>
    </source>
</evidence>
<evidence type="ECO:0007744" key="22">
    <source>
        <dbReference type="PDB" id="7P6S"/>
    </source>
</evidence>
<evidence type="ECO:0007744" key="23">
    <source>
        <dbReference type="PDB" id="7P6T"/>
    </source>
</evidence>
<evidence type="ECO:0007829" key="24">
    <source>
        <dbReference type="PDB" id="7P6S"/>
    </source>
</evidence>
<comment type="function">
    <text evidence="10 17">Functions as an intestinal M-cell transcytotic receptor specific for type-I-piliated bacteria that participates in the mucosal immune response toward these bacteria. At the apical membrane of M-cells it binds fimH, a protein of the bacteria type I pilus tip. Internalizes bound bacteria, like E.coli and S.typhimurium, from the lumen of the intestine and delivers them, through M-cells, to the underlying organized lymphoid follicles where they are captured by antigen-presenting dendritic cells to elicit a mucosal immune response.</text>
</comment>
<comment type="subunit">
    <text evidence="2 9 10">Interacts with SYCN (By similarity). Interacts with bacterial adhesin fimH (PubMed:19907495, PubMed:35273390).</text>
</comment>
<comment type="interaction">
    <interactant intactId="EBI-17746146">
        <id>P55259-4</id>
    </interactant>
    <interactant intactId="EBI-10266796">
        <id>Q8N5M9</id>
        <label>JAGN1</label>
    </interactant>
    <organismsDiffer>false</organismsDiffer>
    <experiments>3</experiments>
</comment>
<comment type="subcellular location">
    <subcellularLocation>
        <location evidence="2">Zymogen granule membrane</location>
        <topology evidence="2">Lipid-anchor</topology>
        <topology evidence="2">GPI-anchor</topology>
    </subcellularLocation>
    <subcellularLocation>
        <location evidence="8">Secreted</location>
    </subcellularLocation>
    <subcellularLocation>
        <location evidence="2">Cell membrane</location>
        <topology evidence="2">Lipid-anchor</topology>
        <topology evidence="2">GPI-anchor</topology>
    </subcellularLocation>
    <subcellularLocation>
        <location evidence="4">Apical cell membrane</location>
        <topology evidence="2">Lipid-anchor</topology>
        <topology evidence="2">GPI-anchor</topology>
    </subcellularLocation>
    <subcellularLocation>
        <location evidence="2">Membrane raft</location>
        <topology evidence="2">Lipid-anchor</topology>
        <topology evidence="2">GPI-anchor</topology>
    </subcellularLocation>
    <subcellularLocation>
        <location evidence="4">Endosome</location>
    </subcellularLocation>
    <text evidence="16">Secreted, after cleavage, in the pancreatic juice.</text>
</comment>
<comment type="alternative products">
    <event type="alternative splicing"/>
    <isoform>
        <id>P55259-1</id>
        <name>1</name>
        <sequence type="displayed"/>
    </isoform>
    <isoform>
        <id>P55259-2</id>
        <name evidence="12">Beta</name>
        <sequence type="described" ref="VSP_006948"/>
    </isoform>
    <isoform>
        <id>P55259-3</id>
        <name evidence="12">Alpha</name>
        <sequence type="described" ref="VSP_035750"/>
    </isoform>
    <isoform>
        <id>P55259-4</id>
        <name>2</name>
        <sequence type="described" ref="VSP_035749"/>
    </isoform>
</comment>
<comment type="tissue specificity">
    <text evidence="8 9 11">Expressed in pancreas (at protein level) (PubMed:10760606, PubMed:8666297). Specifically expressed by M (microfold) cells which are atypical epithelial cells of the intestine (at protein level) (PubMed:19907495).</text>
</comment>
<comment type="domain">
    <text evidence="1">Each ZP domain consists of an N-terminal (ZP-N) and C-terminal (ZP-C) region connected by a flexible linker; the linker allows the ZP domain to wrap around the ZP-C subdomain of the preceding subunit.</text>
</comment>
<comment type="PTM">
    <text evidence="10">N-glycosylated. Glycosylated Asn-65 may be required for interaction with bacterial adhesin fimH.</text>
</comment>
<comment type="caution">
    <text evidence="15">It is uncertain whether Met-1 or Met-8 is the initiator.</text>
</comment>
<comment type="sequence caution" evidence="15">
    <conflict type="erroneous initiation">
        <sequence resource="EMBL-CDS" id="AAB19240"/>
    </conflict>
</comment>
<sequence>MPHLMERMVGSGLLWLALVSCILTQASAVQRGYGNPIEASSYGLDLDCGAPGTPEAHVCFDPCQNYTLLDEPFRSTENSAGSQGCDKNMSGWYRFVGEGGVRMSETCVQVHRCQTDAPMWLNGTHPALGDGITNHTACAHWSGNCCFWKTEVLVKACPGGYHVYRLEGTPWCNLRYCTVPRDPSTVEDKCEKACRPEEECLALNSTWGCFCRQDLNSSDVHSLQPQLDCGPREIKVKVDKCLLGGLGLGEEVIAYLRDPNCSSILQTEERNWVSVTSPVQASACRNILERNQTHAIYKNTLSLVNDFIIRDTILNINFQCAYPLDMKVSLQAALQPIVSSLNVSVDGNGEFIVRMALFQDQNYTNPYEGDAVELSVESVLYVGAILEQGDTSRFNLVLRNCYATPTEDKADLVKYFIIRNSCSNQRDSTIHVEENGQSSESRFSVQMFMFAGHYDLVFLHCEIHLCDSLNEQCQPSCSRSQVRSEVPAIDLARVLDLGPITRRGAQSPGVMNGTPSTAGFLVAWPMVLLTVLLAWLF</sequence>
<proteinExistence type="evidence at protein level"/>
<reference key="1">
    <citation type="journal article" date="1996" name="Gene">
        <title>Sequence of the cDNA encoding human GP-2, the major membrane protein in the secretory granule of the exocrine pancreas.</title>
        <authorList>
            <person name="Wong S.M.E."/>
            <person name="Lowe A.W."/>
        </authorList>
    </citation>
    <scope>NUCLEOTIDE SEQUENCE [MRNA] (ISOFORM ALPHA)</scope>
    <scope>TISSUE SPECIFICITY</scope>
</reference>
<reference key="2">
    <citation type="journal article" date="2004" name="Nature">
        <title>The sequence and analysis of duplication-rich human chromosome 16.</title>
        <authorList>
            <person name="Martin J."/>
            <person name="Han C."/>
            <person name="Gordon L.A."/>
            <person name="Terry A."/>
            <person name="Prabhakar S."/>
            <person name="She X."/>
            <person name="Xie G."/>
            <person name="Hellsten U."/>
            <person name="Chan Y.M."/>
            <person name="Altherr M."/>
            <person name="Couronne O."/>
            <person name="Aerts A."/>
            <person name="Bajorek E."/>
            <person name="Black S."/>
            <person name="Blumer H."/>
            <person name="Branscomb E."/>
            <person name="Brown N.C."/>
            <person name="Bruno W.J."/>
            <person name="Buckingham J.M."/>
            <person name="Callen D.F."/>
            <person name="Campbell C.S."/>
            <person name="Campbell M.L."/>
            <person name="Campbell E.W."/>
            <person name="Caoile C."/>
            <person name="Challacombe J.F."/>
            <person name="Chasteen L.A."/>
            <person name="Chertkov O."/>
            <person name="Chi H.C."/>
            <person name="Christensen M."/>
            <person name="Clark L.M."/>
            <person name="Cohn J.D."/>
            <person name="Denys M."/>
            <person name="Detter J.C."/>
            <person name="Dickson M."/>
            <person name="Dimitrijevic-Bussod M."/>
            <person name="Escobar J."/>
            <person name="Fawcett J.J."/>
            <person name="Flowers D."/>
            <person name="Fotopulos D."/>
            <person name="Glavina T."/>
            <person name="Gomez M."/>
            <person name="Gonzales E."/>
            <person name="Goodstein D."/>
            <person name="Goodwin L.A."/>
            <person name="Grady D.L."/>
            <person name="Grigoriev I."/>
            <person name="Groza M."/>
            <person name="Hammon N."/>
            <person name="Hawkins T."/>
            <person name="Haydu L."/>
            <person name="Hildebrand C.E."/>
            <person name="Huang W."/>
            <person name="Israni S."/>
            <person name="Jett J."/>
            <person name="Jewett P.B."/>
            <person name="Kadner K."/>
            <person name="Kimball H."/>
            <person name="Kobayashi A."/>
            <person name="Krawczyk M.-C."/>
            <person name="Leyba T."/>
            <person name="Longmire J.L."/>
            <person name="Lopez F."/>
            <person name="Lou Y."/>
            <person name="Lowry S."/>
            <person name="Ludeman T."/>
            <person name="Manohar C.F."/>
            <person name="Mark G.A."/>
            <person name="McMurray K.L."/>
            <person name="Meincke L.J."/>
            <person name="Morgan J."/>
            <person name="Moyzis R.K."/>
            <person name="Mundt M.O."/>
            <person name="Munk A.C."/>
            <person name="Nandkeshwar R.D."/>
            <person name="Pitluck S."/>
            <person name="Pollard M."/>
            <person name="Predki P."/>
            <person name="Parson-Quintana B."/>
            <person name="Ramirez L."/>
            <person name="Rash S."/>
            <person name="Retterer J."/>
            <person name="Ricke D.O."/>
            <person name="Robinson D.L."/>
            <person name="Rodriguez A."/>
            <person name="Salamov A."/>
            <person name="Saunders E.H."/>
            <person name="Scott D."/>
            <person name="Shough T."/>
            <person name="Stallings R.L."/>
            <person name="Stalvey M."/>
            <person name="Sutherland R.D."/>
            <person name="Tapia R."/>
            <person name="Tesmer J.G."/>
            <person name="Thayer N."/>
            <person name="Thompson L.S."/>
            <person name="Tice H."/>
            <person name="Torney D.C."/>
            <person name="Tran-Gyamfi M."/>
            <person name="Tsai M."/>
            <person name="Ulanovsky L.E."/>
            <person name="Ustaszewska A."/>
            <person name="Vo N."/>
            <person name="White P.S."/>
            <person name="Williams A.L."/>
            <person name="Wills P.L."/>
            <person name="Wu J.-R."/>
            <person name="Wu K."/>
            <person name="Yang J."/>
            <person name="DeJong P."/>
            <person name="Bruce D."/>
            <person name="Doggett N.A."/>
            <person name="Deaven L."/>
            <person name="Schmutz J."/>
            <person name="Grimwood J."/>
            <person name="Richardson P."/>
            <person name="Rokhsar D.S."/>
            <person name="Eichler E.E."/>
            <person name="Gilna P."/>
            <person name="Lucas S.M."/>
            <person name="Myers R.M."/>
            <person name="Rubin E.M."/>
            <person name="Pennacchio L.A."/>
        </authorList>
    </citation>
    <scope>NUCLEOTIDE SEQUENCE [LARGE SCALE GENOMIC DNA]</scope>
</reference>
<reference key="3">
    <citation type="submission" date="2005-07" db="EMBL/GenBank/DDBJ databases">
        <authorList>
            <person name="Mural R.J."/>
            <person name="Istrail S."/>
            <person name="Sutton G.G."/>
            <person name="Florea L."/>
            <person name="Halpern A.L."/>
            <person name="Mobarry C.M."/>
            <person name="Lippert R."/>
            <person name="Walenz B."/>
            <person name="Shatkay H."/>
            <person name="Dew I."/>
            <person name="Miller J.R."/>
            <person name="Flanigan M.J."/>
            <person name="Edwards N.J."/>
            <person name="Bolanos R."/>
            <person name="Fasulo D."/>
            <person name="Halldorsson B.V."/>
            <person name="Hannenhalli S."/>
            <person name="Turner R."/>
            <person name="Yooseph S."/>
            <person name="Lu F."/>
            <person name="Nusskern D.R."/>
            <person name="Shue B.C."/>
            <person name="Zheng X.H."/>
            <person name="Zhong F."/>
            <person name="Delcher A.L."/>
            <person name="Huson D.H."/>
            <person name="Kravitz S.A."/>
            <person name="Mouchard L."/>
            <person name="Reinert K."/>
            <person name="Remington K.A."/>
            <person name="Clark A.G."/>
            <person name="Waterman M.S."/>
            <person name="Eichler E.E."/>
            <person name="Adams M.D."/>
            <person name="Hunkapiller M.W."/>
            <person name="Myers E.W."/>
            <person name="Venter J.C."/>
        </authorList>
    </citation>
    <scope>NUCLEOTIDE SEQUENCE [LARGE SCALE GENOMIC DNA]</scope>
</reference>
<reference key="4">
    <citation type="journal article" date="2000" name="Biochim. Biophys. Acta">
        <title>Molecular cloning and sequences of cDNAs encoding alpha (large) and beta (small) isoforms of human pancreatic zymogen granule membrane-associated protein GP2.</title>
        <authorList>
            <person name="Fukuoka S."/>
        </authorList>
    </citation>
    <scope>NUCLEOTIDE SEQUENCE [MRNA] OF 8-537 (ISOFORMS ALPHA AND 2)</scope>
    <scope>SUBCELLULAR LOCATION</scope>
    <scope>TISSUE SPECIFICITY</scope>
    <scope>DOMAIN</scope>
</reference>
<reference key="5">
    <citation type="submission" date="1994-09" db="EMBL/GenBank/DDBJ databases">
        <title>Molecular structure of human pancreatic GP2, a major glycoprotein with GPI anchor in the zymogen granule membranes.</title>
        <authorList>
            <person name="Fukuoka S."/>
        </authorList>
    </citation>
    <scope>NUCLEOTIDE SEQUENCE [MRNA] OF 8-537 (ISOFORM BETA)</scope>
    <source>
        <tissue>Pancreas</tissue>
    </source>
</reference>
<reference key="6">
    <citation type="journal article" date="2009" name="Nature">
        <title>Uptake through glycoprotein 2 of FimH(+) bacteria by M cells initiates mucosal immune response.</title>
        <authorList>
            <person name="Hase K."/>
            <person name="Kawano K."/>
            <person name="Nochi T."/>
            <person name="Pontes G.S."/>
            <person name="Fukuda S."/>
            <person name="Ebisawa M."/>
            <person name="Kadokura K."/>
            <person name="Tobe T."/>
            <person name="Fujimura Y."/>
            <person name="Kawano S."/>
            <person name="Yabashi A."/>
            <person name="Waguri S."/>
            <person name="Nakato G."/>
            <person name="Kimura S."/>
            <person name="Murakami T."/>
            <person name="Iimura M."/>
            <person name="Hamura K."/>
            <person name="Fukuoka S."/>
            <person name="Lowe A.W."/>
            <person name="Itoh K."/>
            <person name="Kiyono H."/>
            <person name="Ohno H."/>
        </authorList>
    </citation>
    <scope>FUNCTION</scope>
    <scope>TISSUE SPECIFICITY</scope>
</reference>
<reference evidence="21 22 23" key="7">
    <citation type="journal article" date="2022" name="Nat. Struct. Mol. Biol.">
        <title>Structure of the decoy module of human glycoprotein 2 and uromodulin and its interaction with bacterial adhesin FimH.</title>
        <authorList>
            <person name="Stsiapanava A."/>
            <person name="Xu C."/>
            <person name="Nishio S."/>
            <person name="Han L."/>
            <person name="Yamakawa N."/>
            <person name="Carroni M."/>
            <person name="Tunyasuvunakool K."/>
            <person name="Jumper J."/>
            <person name="de Sanctis D."/>
            <person name="Wu B."/>
            <person name="Jovine L."/>
        </authorList>
    </citation>
    <scope>X-RAY CRYSTALLOGRAPHY (1.35 ANGSTROMS) OF 29-184</scope>
    <scope>FUNCTION</scope>
    <scope>INTERACTION WITH BACTERIAL FIMH</scope>
    <scope>DISULFIDE BONDS</scope>
    <scope>GLYCOSYLATION AT ASN-65; ASN-122 AND ASN-134</scope>
    <scope>MUTAGENESIS OF ASN-65</scope>
</reference>
<accession>P55259</accession>
<accession>A6NFM9</accession>
<accession>A6NJA8</accession>
<accession>Q13338</accession>
<accession>Q9UIF1</accession>
<protein>
    <recommendedName>
        <fullName evidence="19">Pancreatic secretory granule membrane major glycoprotein GP2</fullName>
    </recommendedName>
    <alternativeName>
        <fullName evidence="19">Pancreatic zymogen granule membrane protein GP-2</fullName>
    </alternativeName>
    <alternativeName>
        <fullName>ZAP75</fullName>
    </alternativeName>
</protein>
<keyword id="KW-0002">3D-structure</keyword>
<keyword id="KW-0025">Alternative splicing</keyword>
<keyword id="KW-1003">Cell membrane</keyword>
<keyword id="KW-0968">Cytoplasmic vesicle</keyword>
<keyword id="KW-1015">Disulfide bond</keyword>
<keyword id="KW-0245">EGF-like domain</keyword>
<keyword id="KW-0967">Endosome</keyword>
<keyword id="KW-0325">Glycoprotein</keyword>
<keyword id="KW-0336">GPI-anchor</keyword>
<keyword id="KW-0391">Immunity</keyword>
<keyword id="KW-0399">Innate immunity</keyword>
<keyword id="KW-0449">Lipoprotein</keyword>
<keyword id="KW-0472">Membrane</keyword>
<keyword id="KW-1267">Proteomics identification</keyword>
<keyword id="KW-0675">Receptor</keyword>
<keyword id="KW-1185">Reference proteome</keyword>
<keyword id="KW-0964">Secreted</keyword>
<keyword id="KW-0732">Signal</keyword>
<name>GP2_HUMAN</name>
<dbReference type="EMBL" id="U36221">
    <property type="protein sequence ID" value="AAB19240.1"/>
    <property type="status" value="ALT_INIT"/>
    <property type="molecule type" value="mRNA"/>
</dbReference>
<dbReference type="EMBL" id="AC106796">
    <property type="status" value="NOT_ANNOTATED_CDS"/>
    <property type="molecule type" value="Genomic_DNA"/>
</dbReference>
<dbReference type="EMBL" id="CH471186">
    <property type="protein sequence ID" value="EAW50311.1"/>
    <property type="molecule type" value="Genomic_DNA"/>
</dbReference>
<dbReference type="EMBL" id="AB035541">
    <property type="protein sequence ID" value="BAA88166.1"/>
    <property type="molecule type" value="mRNA"/>
</dbReference>
<dbReference type="EMBL" id="AB035542">
    <property type="protein sequence ID" value="BAA88167.1"/>
    <property type="molecule type" value="mRNA"/>
</dbReference>
<dbReference type="EMBL" id="D38225">
    <property type="protein sequence ID" value="BAA07400.1"/>
    <property type="molecule type" value="mRNA"/>
</dbReference>
<dbReference type="CCDS" id="CCDS10582.2">
    <molecule id="P55259-3"/>
</dbReference>
<dbReference type="CCDS" id="CCDS42128.1">
    <molecule id="P55259-1"/>
</dbReference>
<dbReference type="CCDS" id="CCDS45432.1">
    <molecule id="P55259-4"/>
</dbReference>
<dbReference type="CCDS" id="CCDS45433.1">
    <molecule id="P55259-2"/>
</dbReference>
<dbReference type="PIR" id="G02091">
    <property type="entry name" value="G02091"/>
</dbReference>
<dbReference type="RefSeq" id="NP_001007241.2">
    <molecule id="P55259-1"/>
    <property type="nucleotide sequence ID" value="NM_001007240.3"/>
</dbReference>
<dbReference type="RefSeq" id="NP_001007242.2">
    <molecule id="P55259-2"/>
    <property type="nucleotide sequence ID" value="NM_001007241.3"/>
</dbReference>
<dbReference type="RefSeq" id="NP_001007243.2">
    <molecule id="P55259-4"/>
    <property type="nucleotide sequence ID" value="NM_001007242.3"/>
</dbReference>
<dbReference type="RefSeq" id="NP_001493.2">
    <molecule id="P55259-3"/>
    <property type="nucleotide sequence ID" value="NM_001502.4"/>
</dbReference>
<dbReference type="PDB" id="7P6R">
    <property type="method" value="X-ray"/>
    <property type="resolution" value="1.90 A"/>
    <property type="chains" value="A/B=44-184"/>
</dbReference>
<dbReference type="PDB" id="7P6S">
    <property type="method" value="X-ray"/>
    <property type="resolution" value="1.35 A"/>
    <property type="chains" value="A=44-184"/>
</dbReference>
<dbReference type="PDB" id="7P6T">
    <property type="method" value="X-ray"/>
    <property type="resolution" value="1.40 A"/>
    <property type="chains" value="A=44-184"/>
</dbReference>
<dbReference type="PDBsum" id="7P6R"/>
<dbReference type="PDBsum" id="7P6S"/>
<dbReference type="PDBsum" id="7P6T"/>
<dbReference type="SMR" id="P55259"/>
<dbReference type="BioGRID" id="109075">
    <property type="interactions" value="4"/>
</dbReference>
<dbReference type="FunCoup" id="P55259">
    <property type="interactions" value="41"/>
</dbReference>
<dbReference type="IntAct" id="P55259">
    <property type="interactions" value="3"/>
</dbReference>
<dbReference type="STRING" id="9606.ENSP00000370767"/>
<dbReference type="GlyConnect" id="1593">
    <property type="glycosylation" value="4 N-Linked glycans (1 site)"/>
</dbReference>
<dbReference type="GlyCosmos" id="P55259">
    <property type="glycosylation" value="4 sites, 4 glycans"/>
</dbReference>
<dbReference type="GlyGen" id="P55259">
    <property type="glycosylation" value="12 sites, 8 N-linked glycans (3 sites)"/>
</dbReference>
<dbReference type="iPTMnet" id="P55259"/>
<dbReference type="PhosphoSitePlus" id="P55259"/>
<dbReference type="BioMuta" id="GP2"/>
<dbReference type="DMDM" id="215274153"/>
<dbReference type="MassIVE" id="P55259"/>
<dbReference type="PaxDb" id="9606-ENSP00000370767"/>
<dbReference type="PeptideAtlas" id="P55259"/>
<dbReference type="ProteomicsDB" id="56819">
    <molecule id="P55259-1"/>
</dbReference>
<dbReference type="ProteomicsDB" id="56820">
    <molecule id="P55259-2"/>
</dbReference>
<dbReference type="ProteomicsDB" id="56821">
    <molecule id="P55259-3"/>
</dbReference>
<dbReference type="ProteomicsDB" id="56822">
    <molecule id="P55259-4"/>
</dbReference>
<dbReference type="ABCD" id="P55259">
    <property type="antibodies" value="4 sequenced antibodies"/>
</dbReference>
<dbReference type="Antibodypedia" id="2620">
    <property type="antibodies" value="445 antibodies from 22 providers"/>
</dbReference>
<dbReference type="DNASU" id="2813"/>
<dbReference type="Ensembl" id="ENST00000302555.10">
    <molecule id="P55259-3"/>
    <property type="protein sequence ID" value="ENSP00000304044.6"/>
    <property type="gene ID" value="ENSG00000169347.17"/>
</dbReference>
<dbReference type="Ensembl" id="ENST00000341642.9">
    <molecule id="P55259-4"/>
    <property type="protein sequence ID" value="ENSP00000343861.5"/>
    <property type="gene ID" value="ENSG00000169347.17"/>
</dbReference>
<dbReference type="Ensembl" id="ENST00000381360.9">
    <molecule id="P55259-2"/>
    <property type="protein sequence ID" value="ENSP00000370765.5"/>
    <property type="gene ID" value="ENSG00000169347.17"/>
</dbReference>
<dbReference type="Ensembl" id="ENST00000381362.8">
    <molecule id="P55259-1"/>
    <property type="protein sequence ID" value="ENSP00000370767.4"/>
    <property type="gene ID" value="ENSG00000169347.17"/>
</dbReference>
<dbReference type="GeneID" id="2813"/>
<dbReference type="KEGG" id="hsa:2813"/>
<dbReference type="MANE-Select" id="ENST00000302555.10">
    <molecule id="P55259-3"/>
    <property type="protein sequence ID" value="ENSP00000304044.6"/>
    <property type="RefSeq nucleotide sequence ID" value="NM_001502.4"/>
    <property type="RefSeq protein sequence ID" value="NP_001493.2"/>
</dbReference>
<dbReference type="UCSC" id="uc002dgv.4">
    <molecule id="P55259-1"/>
    <property type="organism name" value="human"/>
</dbReference>
<dbReference type="AGR" id="HGNC:4441"/>
<dbReference type="CTD" id="2813"/>
<dbReference type="DisGeNET" id="2813"/>
<dbReference type="GeneCards" id="GP2"/>
<dbReference type="HGNC" id="HGNC:4441">
    <property type="gene designation" value="GP2"/>
</dbReference>
<dbReference type="HPA" id="ENSG00000169347">
    <property type="expression patterns" value="Tissue enriched (pancreas)"/>
</dbReference>
<dbReference type="MIM" id="602977">
    <property type="type" value="gene"/>
</dbReference>
<dbReference type="neXtProt" id="NX_P55259"/>
<dbReference type="OpenTargets" id="ENSG00000169347"/>
<dbReference type="PharmGKB" id="PA28822"/>
<dbReference type="VEuPathDB" id="HostDB:ENSG00000169347"/>
<dbReference type="eggNOG" id="ENOG502QT6B">
    <property type="taxonomic scope" value="Eukaryota"/>
</dbReference>
<dbReference type="GeneTree" id="ENSGT00940000156038"/>
<dbReference type="HOGENOM" id="CLU_028679_1_0_1"/>
<dbReference type="InParanoid" id="P55259"/>
<dbReference type="OMA" id="AHICFDP"/>
<dbReference type="OrthoDB" id="9987373at2759"/>
<dbReference type="PAN-GO" id="P55259">
    <property type="GO annotations" value="5 GO annotations based on evolutionary models"/>
</dbReference>
<dbReference type="PhylomeDB" id="P55259"/>
<dbReference type="TreeFam" id="TF330284"/>
<dbReference type="PathwayCommons" id="P55259"/>
<dbReference type="Reactome" id="R-HSA-163125">
    <property type="pathway name" value="Post-translational modification: synthesis of GPI-anchored proteins"/>
</dbReference>
<dbReference type="Reactome" id="R-HSA-9925561">
    <property type="pathway name" value="Developmental Lineage of Pancreatic Acinar Cells"/>
</dbReference>
<dbReference type="SignaLink" id="P55259"/>
<dbReference type="BioGRID-ORCS" id="2813">
    <property type="hits" value="15 hits in 1142 CRISPR screens"/>
</dbReference>
<dbReference type="ChiTaRS" id="GP2">
    <property type="organism name" value="human"/>
</dbReference>
<dbReference type="GeneWiki" id="GP2_(gene)"/>
<dbReference type="GenomeRNAi" id="2813"/>
<dbReference type="Pharos" id="P55259">
    <property type="development level" value="Tbio"/>
</dbReference>
<dbReference type="PRO" id="PR:P55259"/>
<dbReference type="Proteomes" id="UP000005640">
    <property type="component" value="Chromosome 16"/>
</dbReference>
<dbReference type="RNAct" id="P55259">
    <property type="molecule type" value="protein"/>
</dbReference>
<dbReference type="Bgee" id="ENSG00000169347">
    <property type="expression patterns" value="Expressed in body of pancreas and 114 other cell types or tissues"/>
</dbReference>
<dbReference type="ExpressionAtlas" id="P55259">
    <property type="expression patterns" value="baseline and differential"/>
</dbReference>
<dbReference type="GO" id="GO:0016324">
    <property type="term" value="C:apical plasma membrane"/>
    <property type="evidence" value="ECO:0000314"/>
    <property type="project" value="UniProtKB"/>
</dbReference>
<dbReference type="GO" id="GO:0009986">
    <property type="term" value="C:cell surface"/>
    <property type="evidence" value="ECO:0000318"/>
    <property type="project" value="GO_Central"/>
</dbReference>
<dbReference type="GO" id="GO:0005768">
    <property type="term" value="C:endosome"/>
    <property type="evidence" value="ECO:0000314"/>
    <property type="project" value="UniProtKB"/>
</dbReference>
<dbReference type="GO" id="GO:0009897">
    <property type="term" value="C:external side of plasma membrane"/>
    <property type="evidence" value="ECO:0000250"/>
    <property type="project" value="UniProtKB"/>
</dbReference>
<dbReference type="GO" id="GO:0070062">
    <property type="term" value="C:extracellular exosome"/>
    <property type="evidence" value="ECO:0007005"/>
    <property type="project" value="UniProtKB"/>
</dbReference>
<dbReference type="GO" id="GO:0005576">
    <property type="term" value="C:extracellular region"/>
    <property type="evidence" value="ECO:0000304"/>
    <property type="project" value="Reactome"/>
</dbReference>
<dbReference type="GO" id="GO:0005615">
    <property type="term" value="C:extracellular space"/>
    <property type="evidence" value="ECO:0000318"/>
    <property type="project" value="GO_Central"/>
</dbReference>
<dbReference type="GO" id="GO:0045121">
    <property type="term" value="C:membrane raft"/>
    <property type="evidence" value="ECO:0007669"/>
    <property type="project" value="UniProtKB-SubCell"/>
</dbReference>
<dbReference type="GO" id="GO:0005886">
    <property type="term" value="C:plasma membrane"/>
    <property type="evidence" value="ECO:0000304"/>
    <property type="project" value="Reactome"/>
</dbReference>
<dbReference type="GO" id="GO:0042589">
    <property type="term" value="C:zymogen granule membrane"/>
    <property type="evidence" value="ECO:0000250"/>
    <property type="project" value="UniProtKB"/>
</dbReference>
<dbReference type="GO" id="GO:0003823">
    <property type="term" value="F:antigen binding"/>
    <property type="evidence" value="ECO:0000314"/>
    <property type="project" value="UniProtKB"/>
</dbReference>
<dbReference type="GO" id="GO:0002412">
    <property type="term" value="P:antigen transcytosis by M cells in mucosal-associated lymphoid tissue"/>
    <property type="evidence" value="ECO:0000250"/>
    <property type="project" value="UniProtKB"/>
</dbReference>
<dbReference type="GO" id="GO:0045087">
    <property type="term" value="P:innate immune response"/>
    <property type="evidence" value="ECO:0007669"/>
    <property type="project" value="UniProtKB-KW"/>
</dbReference>
<dbReference type="GO" id="GO:1990266">
    <property type="term" value="P:neutrophil migration"/>
    <property type="evidence" value="ECO:0000318"/>
    <property type="project" value="GO_Central"/>
</dbReference>
<dbReference type="FunFam" id="2.60.40.4100:FF:000001">
    <property type="entry name" value="alpha-tectorin isoform X1"/>
    <property type="match status" value="1"/>
</dbReference>
<dbReference type="FunFam" id="2.60.40.3210:FF:000003">
    <property type="entry name" value="Glycoprotein 2"/>
    <property type="match status" value="1"/>
</dbReference>
<dbReference type="Gene3D" id="2.60.40.4100">
    <property type="entry name" value="Zona pellucida, ZP-C domain"/>
    <property type="match status" value="1"/>
</dbReference>
<dbReference type="Gene3D" id="2.60.40.3210">
    <property type="entry name" value="Zona pellucida, ZP-N domain"/>
    <property type="match status" value="1"/>
</dbReference>
<dbReference type="InterPro" id="IPR055355">
    <property type="entry name" value="ZP-C"/>
</dbReference>
<dbReference type="InterPro" id="IPR042235">
    <property type="entry name" value="ZP-C_dom"/>
</dbReference>
<dbReference type="InterPro" id="IPR055356">
    <property type="entry name" value="ZP-N"/>
</dbReference>
<dbReference type="InterPro" id="IPR048290">
    <property type="entry name" value="ZP_chr"/>
</dbReference>
<dbReference type="InterPro" id="IPR001507">
    <property type="entry name" value="ZP_dom"/>
</dbReference>
<dbReference type="InterPro" id="IPR017977">
    <property type="entry name" value="ZP_dom_CS"/>
</dbReference>
<dbReference type="PANTHER" id="PTHR14002">
    <property type="entry name" value="ENDOGLIN/TGF-BETA RECEPTOR TYPE III"/>
    <property type="match status" value="1"/>
</dbReference>
<dbReference type="PANTHER" id="PTHR14002:SF16">
    <property type="entry name" value="PANCREATIC SECRETORY GRANULE MEMBRANE MAJOR GLYCOPROTEIN GP2"/>
    <property type="match status" value="1"/>
</dbReference>
<dbReference type="Pfam" id="PF23283">
    <property type="entry name" value="D8C_UMOD"/>
    <property type="match status" value="1"/>
</dbReference>
<dbReference type="Pfam" id="PF00100">
    <property type="entry name" value="Zona_pellucida"/>
    <property type="match status" value="1"/>
</dbReference>
<dbReference type="Pfam" id="PF23344">
    <property type="entry name" value="ZP-N"/>
    <property type="match status" value="1"/>
</dbReference>
<dbReference type="PRINTS" id="PR00023">
    <property type="entry name" value="ZPELLUCIDA"/>
</dbReference>
<dbReference type="SMART" id="SM00241">
    <property type="entry name" value="ZP"/>
    <property type="match status" value="1"/>
</dbReference>
<dbReference type="PROSITE" id="PS00682">
    <property type="entry name" value="ZP_1"/>
    <property type="match status" value="1"/>
</dbReference>
<dbReference type="PROSITE" id="PS51034">
    <property type="entry name" value="ZP_2"/>
    <property type="match status" value="1"/>
</dbReference>
<feature type="signal peptide" evidence="3">
    <location>
        <begin position="1"/>
        <end position="28"/>
    </location>
</feature>
<feature type="chain" id="PRO_0000041657" description="Pancreatic secretory granule membrane major glycoprotein GP2">
    <location>
        <begin position="29"/>
        <end position="512"/>
    </location>
</feature>
<feature type="propeptide" id="PRO_0000041658" description="Removed in mature form" evidence="5">
    <location>
        <begin position="513"/>
        <end position="537"/>
    </location>
</feature>
<feature type="domain" description="EGF-like" evidence="16">
    <location>
        <begin position="186"/>
        <end position="230"/>
    </location>
</feature>
<feature type="domain" description="ZP" evidence="7">
    <location>
        <begin position="228"/>
        <end position="484"/>
    </location>
</feature>
<feature type="region of interest" description="Beta hairpin" evidence="18">
    <location>
        <begin position="41"/>
        <end position="60"/>
    </location>
</feature>
<feature type="region of interest" description="D10C" evidence="18">
    <location>
        <begin position="61"/>
        <end position="81"/>
    </location>
</feature>
<feature type="region of interest" description="ZP-N" evidence="1">
    <location>
        <begin position="228"/>
        <end position="321"/>
    </location>
</feature>
<feature type="region of interest" description="Flexible ZP-N/ZP-C linker" evidence="1">
    <location>
        <begin position="322"/>
        <end position="345"/>
    </location>
</feature>
<feature type="region of interest" description="ZP-C" evidence="1">
    <location>
        <begin position="346"/>
        <end position="484"/>
    </location>
</feature>
<feature type="region of interest" description="Internal hydrophobic patch (IHP)" evidence="1">
    <location>
        <begin position="346"/>
        <end position="357"/>
    </location>
</feature>
<feature type="region of interest" description="External hydrophobic patch (EHP)" evidence="1">
    <location>
        <begin position="491"/>
        <end position="499"/>
    </location>
</feature>
<feature type="lipid moiety-binding region" description="GPI-anchor amidated asparagine" evidence="5">
    <location>
        <position position="512"/>
    </location>
</feature>
<feature type="glycosylation site" description="N-linked (GlcNAc...) (high mannose) asparagine" evidence="10 21 22 23">
    <location>
        <position position="65"/>
    </location>
</feature>
<feature type="glycosylation site" description="N-linked (GlcNAc...) asparagine" evidence="5">
    <location>
        <position position="88"/>
    </location>
</feature>
<feature type="glycosylation site" description="N-linked (GlcNAc...) asparagine" evidence="10 21 22 23">
    <location>
        <position position="122"/>
    </location>
</feature>
<feature type="glycosylation site" description="N-linked (GlcNAc...) asparagine" evidence="10 21 23">
    <location>
        <position position="134"/>
    </location>
</feature>
<feature type="glycosylation site" description="N-linked (GlcNAc...) asparagine" evidence="5">
    <location>
        <position position="204"/>
    </location>
</feature>
<feature type="glycosylation site" description="N-linked (GlcNAc...) asparagine" evidence="5">
    <location>
        <position position="216"/>
    </location>
</feature>
<feature type="glycosylation site" description="N-linked (GlcNAc...) asparagine" evidence="5">
    <location>
        <position position="260"/>
    </location>
</feature>
<feature type="glycosylation site" description="N-linked (GlcNAc...) asparagine" evidence="5">
    <location>
        <position position="291"/>
    </location>
</feature>
<feature type="glycosylation site" description="N-linked (GlcNAc...) asparagine" evidence="5">
    <location>
        <position position="342"/>
    </location>
</feature>
<feature type="glycosylation site" description="N-linked (GlcNAc...) asparagine" evidence="5">
    <location>
        <position position="362"/>
    </location>
</feature>
<feature type="disulfide bond" evidence="10 21 22 23">
    <location>
        <begin position="48"/>
        <end position="59"/>
    </location>
</feature>
<feature type="disulfide bond" evidence="10 21 22 23">
    <location>
        <begin position="63"/>
        <end position="157"/>
    </location>
</feature>
<feature type="disulfide bond" evidence="10 21 22 23">
    <location>
        <begin position="85"/>
        <end position="172"/>
    </location>
</feature>
<feature type="disulfide bond" evidence="10 21 22 23">
    <location>
        <begin position="107"/>
        <end position="145"/>
    </location>
</feature>
<feature type="disulfide bond" evidence="10 21 22 23">
    <location>
        <begin position="113"/>
        <end position="177"/>
    </location>
</feature>
<feature type="disulfide bond" evidence="10 21 22 23">
    <location>
        <begin position="138"/>
        <end position="146"/>
    </location>
</feature>
<feature type="disulfide bond" evidence="1">
    <location>
        <begin position="190"/>
        <end position="200"/>
    </location>
</feature>
<feature type="disulfide bond" evidence="1">
    <location>
        <begin position="194"/>
        <end position="209"/>
    </location>
</feature>
<feature type="disulfide bond" evidence="1">
    <location>
        <begin position="211"/>
        <end position="241"/>
    </location>
</feature>
<feature type="disulfide bond" evidence="1">
    <location>
        <begin position="229"/>
        <end position="320"/>
    </location>
</feature>
<feature type="disulfide bond" evidence="1">
    <location>
        <begin position="261"/>
        <end position="284"/>
    </location>
</feature>
<feature type="disulfide bond" evidence="1 6">
    <location>
        <begin position="401"/>
        <end position="461"/>
    </location>
</feature>
<feature type="disulfide bond" evidence="1">
    <location>
        <begin position="422"/>
        <end position="477"/>
    </location>
</feature>
<feature type="disulfide bond" evidence="1">
    <location>
        <begin position="466"/>
        <end position="473"/>
    </location>
</feature>
<feature type="splice variant" id="VSP_035749" description="In isoform 2." evidence="12">
    <location>
        <begin position="31"/>
        <end position="180"/>
    </location>
</feature>
<feature type="splice variant" id="VSP_006948" description="In isoform Beta." evidence="14">
    <location>
        <begin position="32"/>
        <end position="178"/>
    </location>
</feature>
<feature type="splice variant" id="VSP_035750" description="In isoform Alpha." evidence="12 13">
    <location>
        <begin position="179"/>
        <end position="181"/>
    </location>
</feature>
<feature type="mutagenesis site" description="Impaired interaction with fimH." evidence="10">
    <original>N</original>
    <variation>A</variation>
    <location>
        <position position="65"/>
    </location>
</feature>
<feature type="sequence conflict" description="In Ref. 5; BAA07400." evidence="15" ref="5">
    <original>K</original>
    <variation>KK</variation>
    <location>
        <position position="189"/>
    </location>
</feature>
<feature type="sequence conflict" description="In Ref. 5; BAA07400." evidence="15" ref="5">
    <original>L</original>
    <variation>Q</variation>
    <location>
        <position position="243"/>
    </location>
</feature>
<feature type="sequence conflict" description="In Ref. 5; BAA07400." evidence="15" ref="5">
    <original>L</original>
    <variation>F</variation>
    <location>
        <position position="248"/>
    </location>
</feature>
<feature type="sequence conflict" description="In Ref. 5; BAA07400." evidence="15" ref="5">
    <original>A</original>
    <variation>G</variation>
    <location>
        <position position="505"/>
    </location>
</feature>
<feature type="sequence conflict" description="In Ref. 5; BAA07400." evidence="15" ref="5">
    <original>WLF</original>
    <variation>LAV</variation>
    <location>
        <begin position="535"/>
        <end position="537"/>
    </location>
</feature>
<feature type="turn" evidence="24">
    <location>
        <begin position="54"/>
        <end position="57"/>
    </location>
</feature>
<feature type="helix" evidence="24">
    <location>
        <begin position="62"/>
        <end position="64"/>
    </location>
</feature>
<feature type="strand" evidence="24">
    <location>
        <begin position="67"/>
        <end position="69"/>
    </location>
</feature>
<feature type="helix" evidence="24">
    <location>
        <begin position="72"/>
        <end position="74"/>
    </location>
</feature>
<feature type="strand" evidence="24">
    <location>
        <begin position="91"/>
        <end position="95"/>
    </location>
</feature>
<feature type="strand" evidence="24">
    <location>
        <begin position="115"/>
        <end position="123"/>
    </location>
</feature>
<feature type="strand" evidence="24">
    <location>
        <begin position="133"/>
        <end position="141"/>
    </location>
</feature>
<feature type="strand" evidence="24">
    <location>
        <begin position="144"/>
        <end position="157"/>
    </location>
</feature>
<feature type="turn" evidence="24">
    <location>
        <begin position="158"/>
        <end position="160"/>
    </location>
</feature>
<feature type="strand" evidence="24">
    <location>
        <begin position="161"/>
        <end position="165"/>
    </location>
</feature>
<feature type="strand" evidence="24">
    <location>
        <begin position="170"/>
        <end position="176"/>
    </location>
</feature>
<organism>
    <name type="scientific">Homo sapiens</name>
    <name type="common">Human</name>
    <dbReference type="NCBI Taxonomy" id="9606"/>
    <lineage>
        <taxon>Eukaryota</taxon>
        <taxon>Metazoa</taxon>
        <taxon>Chordata</taxon>
        <taxon>Craniata</taxon>
        <taxon>Vertebrata</taxon>
        <taxon>Euteleostomi</taxon>
        <taxon>Mammalia</taxon>
        <taxon>Eutheria</taxon>
        <taxon>Euarchontoglires</taxon>
        <taxon>Primates</taxon>
        <taxon>Haplorrhini</taxon>
        <taxon>Catarrhini</taxon>
        <taxon>Hominidae</taxon>
        <taxon>Homo</taxon>
    </lineage>
</organism>
<gene>
    <name evidence="20" type="primary">GP2</name>
</gene>